<gene>
    <name type="primary">Slc48a1</name>
    <name type="synonym">Hrg1</name>
</gene>
<accession>B0BNL4</accession>
<accession>Q3KR77</accession>
<reference key="1">
    <citation type="submission" date="2007-06" db="EMBL/GenBank/DDBJ databases">
        <authorList>
            <person name="Mural R.J."/>
            <person name="Adams M.D."/>
            <person name="Myers E.W."/>
            <person name="Smith H.O."/>
            <person name="Venter J.C."/>
        </authorList>
    </citation>
    <scope>NUCLEOTIDE SEQUENCE [LARGE SCALE GENOMIC DNA]</scope>
    <source>
        <strain>Brown Norway</strain>
    </source>
</reference>
<reference key="2">
    <citation type="journal article" date="2004" name="Genome Res.">
        <title>The status, quality, and expansion of the NIH full-length cDNA project: the Mammalian Gene Collection (MGC).</title>
        <authorList>
            <consortium name="The MGC Project Team"/>
        </authorList>
    </citation>
    <scope>NUCLEOTIDE SEQUENCE [LARGE SCALE MRNA] (ISOFORMS 1 AND 2)</scope>
    <source>
        <tissue>Prostate</tissue>
        <tissue>Testis</tissue>
    </source>
</reference>
<evidence type="ECO:0000250" key="1">
    <source>
        <dbReference type="UniProtKB" id="Q6P1K1"/>
    </source>
</evidence>
<evidence type="ECO:0000250" key="2">
    <source>
        <dbReference type="UniProtKB" id="Q9D8M3"/>
    </source>
</evidence>
<evidence type="ECO:0000255" key="3"/>
<evidence type="ECO:0000303" key="4">
    <source>
    </source>
</evidence>
<evidence type="ECO:0000305" key="5"/>
<keyword id="KW-0025">Alternative splicing</keyword>
<keyword id="KW-0968">Cytoplasmic vesicle</keyword>
<keyword id="KW-0967">Endosome</keyword>
<keyword id="KW-0458">Lysosome</keyword>
<keyword id="KW-0472">Membrane</keyword>
<keyword id="KW-1185">Reference proteome</keyword>
<keyword id="KW-0812">Transmembrane</keyword>
<keyword id="KW-1133">Transmembrane helix</keyword>
<keyword id="KW-0813">Transport</keyword>
<dbReference type="EMBL" id="CH474035">
    <property type="protein sequence ID" value="EDL87099.1"/>
    <property type="molecule type" value="Genomic_DNA"/>
</dbReference>
<dbReference type="EMBL" id="BC105856">
    <property type="protein sequence ID" value="AAI05857.1"/>
    <property type="molecule type" value="mRNA"/>
</dbReference>
<dbReference type="EMBL" id="BC158869">
    <property type="protein sequence ID" value="AAI58870.1"/>
    <property type="molecule type" value="mRNA"/>
</dbReference>
<dbReference type="RefSeq" id="NP_001120928.1">
    <molecule id="B0BNL4-1"/>
    <property type="nucleotide sequence ID" value="NM_001127456.1"/>
</dbReference>
<dbReference type="SMR" id="B0BNL4"/>
<dbReference type="FunCoup" id="B0BNL4">
    <property type="interactions" value="179"/>
</dbReference>
<dbReference type="STRING" id="10116.ENSRNOP00000071123"/>
<dbReference type="PhosphoSitePlus" id="B0BNL4"/>
<dbReference type="PaxDb" id="10116-ENSRNOP00000010957"/>
<dbReference type="Ensembl" id="ENSRNOT00000105518.1">
    <molecule id="B0BNL4-2"/>
    <property type="protein sequence ID" value="ENSRNOP00000077408.1"/>
    <property type="gene ID" value="ENSRNOG00000053196.2"/>
</dbReference>
<dbReference type="Ensembl" id="ENSRNOT00000110329.1">
    <molecule id="B0BNL4-1"/>
    <property type="protein sequence ID" value="ENSRNOP00000093159.1"/>
    <property type="gene ID" value="ENSRNOG00000053196.2"/>
</dbReference>
<dbReference type="GeneID" id="300191"/>
<dbReference type="KEGG" id="rno:300191"/>
<dbReference type="UCSC" id="RGD:1562880">
    <molecule id="B0BNL4-1"/>
    <property type="organism name" value="rat"/>
</dbReference>
<dbReference type="AGR" id="RGD:1562880"/>
<dbReference type="CTD" id="55652"/>
<dbReference type="RGD" id="1562880">
    <property type="gene designation" value="Slc48a1"/>
</dbReference>
<dbReference type="eggNOG" id="ENOG502S0AI">
    <property type="taxonomic scope" value="Eukaryota"/>
</dbReference>
<dbReference type="GeneTree" id="ENSGT00390000002307"/>
<dbReference type="HOGENOM" id="CLU_148774_0_0_1"/>
<dbReference type="InParanoid" id="B0BNL4"/>
<dbReference type="OMA" id="RIHISIG"/>
<dbReference type="OrthoDB" id="5954402at2759"/>
<dbReference type="PRO" id="PR:B0BNL4"/>
<dbReference type="Proteomes" id="UP000002494">
    <property type="component" value="Chromosome 7"/>
</dbReference>
<dbReference type="Proteomes" id="UP000234681">
    <property type="component" value="Chromosome 7"/>
</dbReference>
<dbReference type="Bgee" id="ENSRNOG00000053196">
    <property type="expression patterns" value="Expressed in skeletal muscle tissue and 20 other cell types or tissues"/>
</dbReference>
<dbReference type="GO" id="GO:0005737">
    <property type="term" value="C:cytoplasm"/>
    <property type="evidence" value="ECO:0000266"/>
    <property type="project" value="RGD"/>
</dbReference>
<dbReference type="GO" id="GO:0036019">
    <property type="term" value="C:endolysosome"/>
    <property type="evidence" value="ECO:0000266"/>
    <property type="project" value="RGD"/>
</dbReference>
<dbReference type="GO" id="GO:0010008">
    <property type="term" value="C:endosome membrane"/>
    <property type="evidence" value="ECO:0000266"/>
    <property type="project" value="RGD"/>
</dbReference>
<dbReference type="GO" id="GO:0005765">
    <property type="term" value="C:lysosomal membrane"/>
    <property type="evidence" value="ECO:0000266"/>
    <property type="project" value="RGD"/>
</dbReference>
<dbReference type="GO" id="GO:0061474">
    <property type="term" value="C:phagolysosome membrane"/>
    <property type="evidence" value="ECO:0000266"/>
    <property type="project" value="RGD"/>
</dbReference>
<dbReference type="GO" id="GO:0005886">
    <property type="term" value="C:plasma membrane"/>
    <property type="evidence" value="ECO:0000266"/>
    <property type="project" value="RGD"/>
</dbReference>
<dbReference type="GO" id="GO:0020037">
    <property type="term" value="F:heme binding"/>
    <property type="evidence" value="ECO:0000266"/>
    <property type="project" value="RGD"/>
</dbReference>
<dbReference type="GO" id="GO:0015232">
    <property type="term" value="F:heme transmembrane transporter activity"/>
    <property type="evidence" value="ECO:0000266"/>
    <property type="project" value="RGD"/>
</dbReference>
<dbReference type="GO" id="GO:0030218">
    <property type="term" value="P:erythrocyte differentiation"/>
    <property type="evidence" value="ECO:0000266"/>
    <property type="project" value="RGD"/>
</dbReference>
<dbReference type="GO" id="GO:0097037">
    <property type="term" value="P:heme export"/>
    <property type="evidence" value="ECO:0000266"/>
    <property type="project" value="RGD"/>
</dbReference>
<dbReference type="GO" id="GO:0140357">
    <property type="term" value="P:heme export from vacuole to cytoplasm"/>
    <property type="evidence" value="ECO:0000266"/>
    <property type="project" value="RGD"/>
</dbReference>
<dbReference type="GO" id="GO:0042168">
    <property type="term" value="P:heme metabolic process"/>
    <property type="evidence" value="ECO:0000266"/>
    <property type="project" value="RGD"/>
</dbReference>
<dbReference type="GO" id="GO:0015886">
    <property type="term" value="P:heme transport"/>
    <property type="evidence" value="ECO:0000266"/>
    <property type="project" value="RGD"/>
</dbReference>
<dbReference type="GO" id="GO:0051674">
    <property type="term" value="P:localization of cell"/>
    <property type="evidence" value="ECO:0000266"/>
    <property type="project" value="RGD"/>
</dbReference>
<dbReference type="GO" id="GO:0007041">
    <property type="term" value="P:lysosomal transport"/>
    <property type="evidence" value="ECO:0000266"/>
    <property type="project" value="RGD"/>
</dbReference>
<dbReference type="GO" id="GO:0006909">
    <property type="term" value="P:phagocytosis"/>
    <property type="evidence" value="ECO:0000266"/>
    <property type="project" value="RGD"/>
</dbReference>
<dbReference type="InterPro" id="IPR026218">
    <property type="entry name" value="HRG"/>
</dbReference>
<dbReference type="PANTHER" id="PTHR31525">
    <property type="entry name" value="HEME TRANSPORTER HRG1"/>
    <property type="match status" value="1"/>
</dbReference>
<dbReference type="PANTHER" id="PTHR31525:SF1">
    <property type="entry name" value="HEME TRANSPORTER HRG1"/>
    <property type="match status" value="1"/>
</dbReference>
<dbReference type="Pfam" id="PF16954">
    <property type="entry name" value="HRG"/>
    <property type="match status" value="2"/>
</dbReference>
<dbReference type="PRINTS" id="PR02095">
    <property type="entry name" value="TRNSPORTRHRG"/>
</dbReference>
<protein>
    <recommendedName>
        <fullName>Heme transporter HRG1</fullName>
    </recommendedName>
    <alternativeName>
        <fullName>Heme-responsive gene 1 protein homolog</fullName>
        <shortName>HRG-1</shortName>
    </alternativeName>
    <alternativeName>
        <fullName>Solute carrier family 48 member 1</fullName>
    </alternativeName>
</protein>
<proteinExistence type="evidence at transcript level"/>
<name>HRG1_RAT</name>
<sequence>MAPTRLQLGVRAAYSGFSSLAGFSIFFVWTVVYRQPGTAAMGGLAGVLALWVLVTHVMYMQDYWRTWLRGLRGFFFVGALFSAVSFSAFCTFLTLAITQHQSFKDPNSYYLSCVWSFISFKWAFLLSLYAHRYRADFADISILSDF</sequence>
<comment type="function">
    <text evidence="1">Heme transporter that regulates intracellular heme availability through the endosomal or lysosomal compartment. In macrophages of the reticuloendothelial system, is the heme transporter for heme-iron recycling. Essential for macrophage iron homeostasis, transports heme from the phagolysosome to the cytoplasm during erythrophagocytosis (EP).</text>
</comment>
<comment type="catalytic activity">
    <reaction evidence="1">
        <text>heme b(in) = heme b(out)</text>
        <dbReference type="Rhea" id="RHEA:75443"/>
        <dbReference type="ChEBI" id="CHEBI:60344"/>
    </reaction>
</comment>
<comment type="subcellular location">
    <subcellularLocation>
        <location evidence="1">Endosome membrane</location>
        <topology evidence="1">Multi-pass membrane protein</topology>
    </subcellularLocation>
    <subcellularLocation>
        <location evidence="1">Lysosome membrane</location>
        <topology evidence="1">Multi-pass membrane protein</topology>
    </subcellularLocation>
    <subcellularLocation>
        <location evidence="2">Cytoplasmic vesicle</location>
        <location evidence="2">Phagosome membrane</location>
        <topology evidence="3">Multi-pass membrane protein</topology>
    </subcellularLocation>
    <text evidence="2">In macrophages, specifically localizes to the phagolysosomal membranes during erythrophagocytosis.</text>
</comment>
<comment type="alternative products">
    <event type="alternative splicing"/>
    <isoform>
        <id>B0BNL4-1</id>
        <name>1</name>
        <sequence type="displayed"/>
    </isoform>
    <isoform>
        <id>B0BNL4-2</id>
        <name>2</name>
        <sequence type="described" ref="VSP_035185"/>
    </isoform>
</comment>
<comment type="similarity">
    <text evidence="5">Belongs to the HRG family.</text>
</comment>
<organism>
    <name type="scientific">Rattus norvegicus</name>
    <name type="common">Rat</name>
    <dbReference type="NCBI Taxonomy" id="10116"/>
    <lineage>
        <taxon>Eukaryota</taxon>
        <taxon>Metazoa</taxon>
        <taxon>Chordata</taxon>
        <taxon>Craniata</taxon>
        <taxon>Vertebrata</taxon>
        <taxon>Euteleostomi</taxon>
        <taxon>Mammalia</taxon>
        <taxon>Eutheria</taxon>
        <taxon>Euarchontoglires</taxon>
        <taxon>Glires</taxon>
        <taxon>Rodentia</taxon>
        <taxon>Myomorpha</taxon>
        <taxon>Muroidea</taxon>
        <taxon>Muridae</taxon>
        <taxon>Murinae</taxon>
        <taxon>Rattus</taxon>
    </lineage>
</organism>
<feature type="chain" id="PRO_0000348577" description="Heme transporter HRG1">
    <location>
        <begin position="1"/>
        <end position="146"/>
    </location>
</feature>
<feature type="transmembrane region" description="Helical" evidence="3">
    <location>
        <begin position="12"/>
        <end position="32"/>
    </location>
</feature>
<feature type="transmembrane region" description="Helical" evidence="3">
    <location>
        <begin position="40"/>
        <end position="60"/>
    </location>
</feature>
<feature type="transmembrane region" description="Helical" evidence="3">
    <location>
        <begin position="73"/>
        <end position="93"/>
    </location>
</feature>
<feature type="transmembrane region" description="Helical" evidence="3">
    <location>
        <begin position="110"/>
        <end position="130"/>
    </location>
</feature>
<feature type="short sequence motif" description="Di-leucine motif">
    <location>
        <begin position="142"/>
        <end position="143"/>
    </location>
</feature>
<feature type="splice variant" id="VSP_035185" description="In isoform 2." evidence="4">
    <location>
        <begin position="1"/>
        <end position="57"/>
    </location>
</feature>